<keyword id="KW-1185">Reference proteome</keyword>
<protein>
    <recommendedName>
        <fullName>Uncharacterized protein TP_1030</fullName>
    </recommendedName>
</protein>
<organism>
    <name type="scientific">Treponema pallidum (strain Nichols)</name>
    <dbReference type="NCBI Taxonomy" id="243276"/>
    <lineage>
        <taxon>Bacteria</taxon>
        <taxon>Pseudomonadati</taxon>
        <taxon>Spirochaetota</taxon>
        <taxon>Spirochaetia</taxon>
        <taxon>Spirochaetales</taxon>
        <taxon>Treponemataceae</taxon>
        <taxon>Treponema</taxon>
    </lineage>
</organism>
<sequence length="165" mass="17360">MRGLGHEGERDFQIIGGAKPVRVLVRLHRRVLFKLNAPLQLGVTSYCGAMPSCSEKTGSAPNPGSSAPAPAQKKTARCSSLPTHFIFTTPPPPPVSSTLQKGPTGAGCVTAARPAPSSGRQGGGGALYLQFSVRRGSFVSPRAPRAAAQRTCPFSWHRIMSARNV</sequence>
<reference key="1">
    <citation type="journal article" date="1998" name="Science">
        <title>Complete genome sequence of Treponema pallidum, the syphilis spirochete.</title>
        <authorList>
            <person name="Fraser C.M."/>
            <person name="Norris S.J."/>
            <person name="Weinstock G.M."/>
            <person name="White O."/>
            <person name="Sutton G.G."/>
            <person name="Dodson R.J."/>
            <person name="Gwinn M.L."/>
            <person name="Hickey E.K."/>
            <person name="Clayton R.A."/>
            <person name="Ketchum K.A."/>
            <person name="Sodergren E."/>
            <person name="Hardham J.M."/>
            <person name="McLeod M.P."/>
            <person name="Salzberg S.L."/>
            <person name="Peterson J.D."/>
            <person name="Khalak H.G."/>
            <person name="Richardson D.L."/>
            <person name="Howell J.K."/>
            <person name="Chidambaram M."/>
            <person name="Utterback T.R."/>
            <person name="McDonald L.A."/>
            <person name="Artiach P."/>
            <person name="Bowman C."/>
            <person name="Cotton M.D."/>
            <person name="Fujii C."/>
            <person name="Garland S.A."/>
            <person name="Hatch B."/>
            <person name="Horst K."/>
            <person name="Roberts K.M."/>
            <person name="Sandusky M."/>
            <person name="Weidman J.F."/>
            <person name="Smith H.O."/>
            <person name="Venter J.C."/>
        </authorList>
    </citation>
    <scope>NUCLEOTIDE SEQUENCE [LARGE SCALE GENOMIC DNA]</scope>
    <source>
        <strain>Nichols</strain>
    </source>
</reference>
<gene>
    <name type="ordered locus">TP_1030</name>
</gene>
<dbReference type="EMBL" id="AE000520">
    <property type="protein sequence ID" value="AAC65983.1"/>
    <property type="molecule type" value="Genomic_DNA"/>
</dbReference>
<dbReference type="PIR" id="A71252">
    <property type="entry name" value="A71252"/>
</dbReference>
<dbReference type="STRING" id="243276.TP_1030"/>
<dbReference type="EnsemblBacteria" id="AAC65983">
    <property type="protein sequence ID" value="AAC65983"/>
    <property type="gene ID" value="TP_1030"/>
</dbReference>
<dbReference type="KEGG" id="tpa:TP_1030"/>
<dbReference type="HOGENOM" id="CLU_1610040_0_0_12"/>
<dbReference type="Proteomes" id="UP000000811">
    <property type="component" value="Chromosome"/>
</dbReference>
<proteinExistence type="predicted"/>
<name>Y1030_TREPA</name>
<evidence type="ECO:0000256" key="1">
    <source>
        <dbReference type="SAM" id="MobiDB-lite"/>
    </source>
</evidence>
<accession>O83993</accession>
<feature type="chain" id="PRO_0000202375" description="Uncharacterized protein TP_1030">
    <location>
        <begin position="1"/>
        <end position="165"/>
    </location>
</feature>
<feature type="region of interest" description="Disordered" evidence="1">
    <location>
        <begin position="53"/>
        <end position="123"/>
    </location>
</feature>
<feature type="compositionally biased region" description="Low complexity" evidence="1">
    <location>
        <begin position="58"/>
        <end position="71"/>
    </location>
</feature>